<keyword id="KW-0030">Aminoacyl-tRNA synthetase</keyword>
<keyword id="KW-0067">ATP-binding</keyword>
<keyword id="KW-0963">Cytoplasm</keyword>
<keyword id="KW-0436">Ligase</keyword>
<keyword id="KW-0479">Metal-binding</keyword>
<keyword id="KW-0547">Nucleotide-binding</keyword>
<keyword id="KW-0648">Protein biosynthesis</keyword>
<keyword id="KW-0694">RNA-binding</keyword>
<keyword id="KW-0820">tRNA-binding</keyword>
<keyword id="KW-0862">Zinc</keyword>
<gene>
    <name evidence="1" type="primary">metG</name>
    <name type="ordered locus">Reut_A0674</name>
</gene>
<sequence length="688" mass="76733">MTARRILVTSALPYANGQIHIGHLVEYIQTDIWVRFQRMMGNEVYYVGADDTHGTPVMLRAEKEGITPKQLIDRVWTEHKRDFDSFLVSFDNYYSTDAEENRELCEKIYLALKADDLIAEREVEQFYDPVKNMFLPDRFIKGECPKCGAKDQYGDSCEVCGTTYVPTDLKNPYSVVSGATPVRKSSTHFFFKLSDPRCETFLREWVADLAQPEAANKMQEWLGSEGEASTLSDWDISRDAPYFGFEIPGAPGKYFYVWLDAPIGYYASFKNLAEKKGIDFDAWVGPHSTAEQYHFIGKDILYFHTLFWPAMLRFSGYRTPTNVFAHGFLTVDGAKMSKSRGTFITAQSYIDTGMNPEWLRYYFAAKLNASMEDLDLNLDDFIARVNSDLIGKYVNIASRAAGFLVKRFEGKVDEAALAHPLLKQLREAAPQVAQLYEAREYSKALRLVMELTDTVNAFVDTEKPWELAKDEAKRSALHAACSVSLEAFRLLTVYLKPVVPTVAAGVERFLNVEPLDWRAIDKQLSASSPVQAYQHLMTRVDAKQVDALLAANRESLQATAPAAGAAAAASIEPIADTITIDDFAKIDLRVAKIVECQKVEGSSKLLQLTLDLGEGRTRNVFSGIQSAYTPEQLVGKLTVVVANLAPRKMKFGVSEGMVLAASAADEKANPGLYILEPHSGAVPGMRIG</sequence>
<evidence type="ECO:0000255" key="1">
    <source>
        <dbReference type="HAMAP-Rule" id="MF_00098"/>
    </source>
</evidence>
<proteinExistence type="inferred from homology"/>
<name>SYM_CUPPJ</name>
<accession>Q474X7</accession>
<comment type="function">
    <text evidence="1">Is required not only for elongation of protein synthesis but also for the initiation of all mRNA translation through initiator tRNA(fMet) aminoacylation.</text>
</comment>
<comment type="catalytic activity">
    <reaction evidence="1">
        <text>tRNA(Met) + L-methionine + ATP = L-methionyl-tRNA(Met) + AMP + diphosphate</text>
        <dbReference type="Rhea" id="RHEA:13481"/>
        <dbReference type="Rhea" id="RHEA-COMP:9667"/>
        <dbReference type="Rhea" id="RHEA-COMP:9698"/>
        <dbReference type="ChEBI" id="CHEBI:30616"/>
        <dbReference type="ChEBI" id="CHEBI:33019"/>
        <dbReference type="ChEBI" id="CHEBI:57844"/>
        <dbReference type="ChEBI" id="CHEBI:78442"/>
        <dbReference type="ChEBI" id="CHEBI:78530"/>
        <dbReference type="ChEBI" id="CHEBI:456215"/>
        <dbReference type="EC" id="6.1.1.10"/>
    </reaction>
</comment>
<comment type="cofactor">
    <cofactor evidence="1">
        <name>Zn(2+)</name>
        <dbReference type="ChEBI" id="CHEBI:29105"/>
    </cofactor>
    <text evidence="1">Binds 1 zinc ion per subunit.</text>
</comment>
<comment type="subunit">
    <text evidence="1">Homodimer.</text>
</comment>
<comment type="subcellular location">
    <subcellularLocation>
        <location evidence="1">Cytoplasm</location>
    </subcellularLocation>
</comment>
<comment type="similarity">
    <text evidence="1">Belongs to the class-I aminoacyl-tRNA synthetase family. MetG type 1 subfamily.</text>
</comment>
<feature type="chain" id="PRO_0000331883" description="Methionine--tRNA ligase">
    <location>
        <begin position="1"/>
        <end position="688"/>
    </location>
</feature>
<feature type="domain" description="tRNA-binding" evidence="1">
    <location>
        <begin position="582"/>
        <end position="688"/>
    </location>
</feature>
<feature type="short sequence motif" description="'HIGH' region">
    <location>
        <begin position="13"/>
        <end position="23"/>
    </location>
</feature>
<feature type="short sequence motif" description="'KMSKS' region">
    <location>
        <begin position="335"/>
        <end position="339"/>
    </location>
</feature>
<feature type="binding site" evidence="1">
    <location>
        <position position="144"/>
    </location>
    <ligand>
        <name>Zn(2+)</name>
        <dbReference type="ChEBI" id="CHEBI:29105"/>
    </ligand>
</feature>
<feature type="binding site" evidence="1">
    <location>
        <position position="147"/>
    </location>
    <ligand>
        <name>Zn(2+)</name>
        <dbReference type="ChEBI" id="CHEBI:29105"/>
    </ligand>
</feature>
<feature type="binding site" evidence="1">
    <location>
        <position position="157"/>
    </location>
    <ligand>
        <name>Zn(2+)</name>
        <dbReference type="ChEBI" id="CHEBI:29105"/>
    </ligand>
</feature>
<feature type="binding site" evidence="1">
    <location>
        <position position="160"/>
    </location>
    <ligand>
        <name>Zn(2+)</name>
        <dbReference type="ChEBI" id="CHEBI:29105"/>
    </ligand>
</feature>
<feature type="binding site" evidence="1">
    <location>
        <position position="338"/>
    </location>
    <ligand>
        <name>ATP</name>
        <dbReference type="ChEBI" id="CHEBI:30616"/>
    </ligand>
</feature>
<reference key="1">
    <citation type="journal article" date="2010" name="PLoS ONE">
        <title>The complete multipartite genome sequence of Cupriavidus necator JMP134, a versatile pollutant degrader.</title>
        <authorList>
            <person name="Lykidis A."/>
            <person name="Perez-Pantoja D."/>
            <person name="Ledger T."/>
            <person name="Mavromatis K."/>
            <person name="Anderson I.J."/>
            <person name="Ivanova N.N."/>
            <person name="Hooper S.D."/>
            <person name="Lapidus A."/>
            <person name="Lucas S."/>
            <person name="Gonzalez B."/>
            <person name="Kyrpides N.C."/>
        </authorList>
    </citation>
    <scope>NUCLEOTIDE SEQUENCE [LARGE SCALE GENOMIC DNA]</scope>
    <source>
        <strain>JMP134 / LMG 1197</strain>
    </source>
</reference>
<protein>
    <recommendedName>
        <fullName evidence="1">Methionine--tRNA ligase</fullName>
        <ecNumber evidence="1">6.1.1.10</ecNumber>
    </recommendedName>
    <alternativeName>
        <fullName evidence="1">Methionyl-tRNA synthetase</fullName>
        <shortName evidence="1">MetRS</shortName>
    </alternativeName>
</protein>
<organism>
    <name type="scientific">Cupriavidus pinatubonensis (strain JMP 134 / LMG 1197)</name>
    <name type="common">Cupriavidus necator (strain JMP 134)</name>
    <dbReference type="NCBI Taxonomy" id="264198"/>
    <lineage>
        <taxon>Bacteria</taxon>
        <taxon>Pseudomonadati</taxon>
        <taxon>Pseudomonadota</taxon>
        <taxon>Betaproteobacteria</taxon>
        <taxon>Burkholderiales</taxon>
        <taxon>Burkholderiaceae</taxon>
        <taxon>Cupriavidus</taxon>
    </lineage>
</organism>
<dbReference type="EC" id="6.1.1.10" evidence="1"/>
<dbReference type="EMBL" id="CP000090">
    <property type="protein sequence ID" value="AAZ60056.1"/>
    <property type="molecule type" value="Genomic_DNA"/>
</dbReference>
<dbReference type="SMR" id="Q474X7"/>
<dbReference type="STRING" id="264198.Reut_A0674"/>
<dbReference type="KEGG" id="reu:Reut_A0674"/>
<dbReference type="eggNOG" id="COG0073">
    <property type="taxonomic scope" value="Bacteria"/>
</dbReference>
<dbReference type="eggNOG" id="COG0143">
    <property type="taxonomic scope" value="Bacteria"/>
</dbReference>
<dbReference type="HOGENOM" id="CLU_009710_7_0_4"/>
<dbReference type="OrthoDB" id="9810191at2"/>
<dbReference type="GO" id="GO:0005829">
    <property type="term" value="C:cytosol"/>
    <property type="evidence" value="ECO:0007669"/>
    <property type="project" value="TreeGrafter"/>
</dbReference>
<dbReference type="GO" id="GO:0005524">
    <property type="term" value="F:ATP binding"/>
    <property type="evidence" value="ECO:0007669"/>
    <property type="project" value="UniProtKB-UniRule"/>
</dbReference>
<dbReference type="GO" id="GO:0046872">
    <property type="term" value="F:metal ion binding"/>
    <property type="evidence" value="ECO:0007669"/>
    <property type="project" value="UniProtKB-KW"/>
</dbReference>
<dbReference type="GO" id="GO:0004825">
    <property type="term" value="F:methionine-tRNA ligase activity"/>
    <property type="evidence" value="ECO:0007669"/>
    <property type="project" value="UniProtKB-UniRule"/>
</dbReference>
<dbReference type="GO" id="GO:0000049">
    <property type="term" value="F:tRNA binding"/>
    <property type="evidence" value="ECO:0007669"/>
    <property type="project" value="UniProtKB-KW"/>
</dbReference>
<dbReference type="GO" id="GO:0006431">
    <property type="term" value="P:methionyl-tRNA aminoacylation"/>
    <property type="evidence" value="ECO:0007669"/>
    <property type="project" value="UniProtKB-UniRule"/>
</dbReference>
<dbReference type="CDD" id="cd07957">
    <property type="entry name" value="Anticodon_Ia_Met"/>
    <property type="match status" value="1"/>
</dbReference>
<dbReference type="CDD" id="cd00814">
    <property type="entry name" value="MetRS_core"/>
    <property type="match status" value="1"/>
</dbReference>
<dbReference type="CDD" id="cd02800">
    <property type="entry name" value="tRNA_bind_EcMetRS_like"/>
    <property type="match status" value="1"/>
</dbReference>
<dbReference type="FunFam" id="2.20.28.20:FF:000001">
    <property type="entry name" value="Methionine--tRNA ligase"/>
    <property type="match status" value="1"/>
</dbReference>
<dbReference type="FunFam" id="2.40.50.140:FF:000042">
    <property type="entry name" value="Methionine--tRNA ligase"/>
    <property type="match status" value="1"/>
</dbReference>
<dbReference type="Gene3D" id="3.40.50.620">
    <property type="entry name" value="HUPs"/>
    <property type="match status" value="1"/>
</dbReference>
<dbReference type="Gene3D" id="1.10.730.10">
    <property type="entry name" value="Isoleucyl-tRNA Synthetase, Domain 1"/>
    <property type="match status" value="1"/>
</dbReference>
<dbReference type="Gene3D" id="2.20.28.20">
    <property type="entry name" value="Methionyl-tRNA synthetase, Zn-domain"/>
    <property type="match status" value="1"/>
</dbReference>
<dbReference type="Gene3D" id="2.40.50.140">
    <property type="entry name" value="Nucleic acid-binding proteins"/>
    <property type="match status" value="1"/>
</dbReference>
<dbReference type="HAMAP" id="MF_00098">
    <property type="entry name" value="Met_tRNA_synth_type1"/>
    <property type="match status" value="1"/>
</dbReference>
<dbReference type="InterPro" id="IPR001412">
    <property type="entry name" value="aa-tRNA-synth_I_CS"/>
</dbReference>
<dbReference type="InterPro" id="IPR041872">
    <property type="entry name" value="Anticodon_Met"/>
</dbReference>
<dbReference type="InterPro" id="IPR004495">
    <property type="entry name" value="Met-tRNA-synth_bsu_C"/>
</dbReference>
<dbReference type="InterPro" id="IPR023458">
    <property type="entry name" value="Met-tRNA_ligase_1"/>
</dbReference>
<dbReference type="InterPro" id="IPR014758">
    <property type="entry name" value="Met-tRNA_synth"/>
</dbReference>
<dbReference type="InterPro" id="IPR015413">
    <property type="entry name" value="Methionyl/Leucyl_tRNA_Synth"/>
</dbReference>
<dbReference type="InterPro" id="IPR033911">
    <property type="entry name" value="MetRS_core"/>
</dbReference>
<dbReference type="InterPro" id="IPR029038">
    <property type="entry name" value="MetRS_Zn"/>
</dbReference>
<dbReference type="InterPro" id="IPR012340">
    <property type="entry name" value="NA-bd_OB-fold"/>
</dbReference>
<dbReference type="InterPro" id="IPR014729">
    <property type="entry name" value="Rossmann-like_a/b/a_fold"/>
</dbReference>
<dbReference type="InterPro" id="IPR002547">
    <property type="entry name" value="tRNA-bd_dom"/>
</dbReference>
<dbReference type="InterPro" id="IPR009080">
    <property type="entry name" value="tRNAsynth_Ia_anticodon-bd"/>
</dbReference>
<dbReference type="NCBIfam" id="TIGR00398">
    <property type="entry name" value="metG"/>
    <property type="match status" value="1"/>
</dbReference>
<dbReference type="NCBIfam" id="TIGR00399">
    <property type="entry name" value="metG_C_term"/>
    <property type="match status" value="1"/>
</dbReference>
<dbReference type="NCBIfam" id="NF001100">
    <property type="entry name" value="PRK00133.1"/>
    <property type="match status" value="1"/>
</dbReference>
<dbReference type="PANTHER" id="PTHR45765">
    <property type="entry name" value="METHIONINE--TRNA LIGASE"/>
    <property type="match status" value="1"/>
</dbReference>
<dbReference type="PANTHER" id="PTHR45765:SF1">
    <property type="entry name" value="METHIONINE--TRNA LIGASE, CYTOPLASMIC"/>
    <property type="match status" value="1"/>
</dbReference>
<dbReference type="Pfam" id="PF19303">
    <property type="entry name" value="Anticodon_3"/>
    <property type="match status" value="1"/>
</dbReference>
<dbReference type="Pfam" id="PF09334">
    <property type="entry name" value="tRNA-synt_1g"/>
    <property type="match status" value="1"/>
</dbReference>
<dbReference type="Pfam" id="PF01588">
    <property type="entry name" value="tRNA_bind"/>
    <property type="match status" value="1"/>
</dbReference>
<dbReference type="PRINTS" id="PR01041">
    <property type="entry name" value="TRNASYNTHMET"/>
</dbReference>
<dbReference type="SUPFAM" id="SSF47323">
    <property type="entry name" value="Anticodon-binding domain of a subclass of class I aminoacyl-tRNA synthetases"/>
    <property type="match status" value="1"/>
</dbReference>
<dbReference type="SUPFAM" id="SSF57770">
    <property type="entry name" value="Methionyl-tRNA synthetase (MetRS), Zn-domain"/>
    <property type="match status" value="1"/>
</dbReference>
<dbReference type="SUPFAM" id="SSF50249">
    <property type="entry name" value="Nucleic acid-binding proteins"/>
    <property type="match status" value="1"/>
</dbReference>
<dbReference type="SUPFAM" id="SSF52374">
    <property type="entry name" value="Nucleotidylyl transferase"/>
    <property type="match status" value="1"/>
</dbReference>
<dbReference type="PROSITE" id="PS00178">
    <property type="entry name" value="AA_TRNA_LIGASE_I"/>
    <property type="match status" value="1"/>
</dbReference>
<dbReference type="PROSITE" id="PS50886">
    <property type="entry name" value="TRBD"/>
    <property type="match status" value="1"/>
</dbReference>